<feature type="chain" id="PRO_1000187993" description="Ribonuclease Z">
    <location>
        <begin position="1"/>
        <end position="309"/>
    </location>
</feature>
<feature type="active site" description="Proton acceptor" evidence="1">
    <location>
        <position position="67"/>
    </location>
</feature>
<feature type="binding site" evidence="1">
    <location>
        <position position="63"/>
    </location>
    <ligand>
        <name>Zn(2+)</name>
        <dbReference type="ChEBI" id="CHEBI:29105"/>
        <label>1</label>
        <note>catalytic</note>
    </ligand>
</feature>
<feature type="binding site" evidence="1">
    <location>
        <position position="65"/>
    </location>
    <ligand>
        <name>Zn(2+)</name>
        <dbReference type="ChEBI" id="CHEBI:29105"/>
        <label>1</label>
        <note>catalytic</note>
    </ligand>
</feature>
<feature type="binding site" evidence="1">
    <location>
        <position position="67"/>
    </location>
    <ligand>
        <name>Zn(2+)</name>
        <dbReference type="ChEBI" id="CHEBI:29105"/>
        <label>2</label>
        <note>catalytic</note>
    </ligand>
</feature>
<feature type="binding site" evidence="1">
    <location>
        <position position="68"/>
    </location>
    <ligand>
        <name>Zn(2+)</name>
        <dbReference type="ChEBI" id="CHEBI:29105"/>
        <label>2</label>
        <note>catalytic</note>
    </ligand>
</feature>
<feature type="binding site" evidence="1">
    <location>
        <position position="145"/>
    </location>
    <ligand>
        <name>Zn(2+)</name>
        <dbReference type="ChEBI" id="CHEBI:29105"/>
        <label>1</label>
        <note>catalytic</note>
    </ligand>
</feature>
<feature type="binding site" evidence="1">
    <location>
        <position position="216"/>
    </location>
    <ligand>
        <name>Zn(2+)</name>
        <dbReference type="ChEBI" id="CHEBI:29105"/>
        <label>1</label>
        <note>catalytic</note>
    </ligand>
</feature>
<feature type="binding site" evidence="1">
    <location>
        <position position="216"/>
    </location>
    <ligand>
        <name>Zn(2+)</name>
        <dbReference type="ChEBI" id="CHEBI:29105"/>
        <label>2</label>
        <note>catalytic</note>
    </ligand>
</feature>
<feature type="binding site" evidence="1">
    <location>
        <position position="274"/>
    </location>
    <ligand>
        <name>Zn(2+)</name>
        <dbReference type="ChEBI" id="CHEBI:29105"/>
        <label>2</label>
        <note>catalytic</note>
    </ligand>
</feature>
<accession>C1C636</accession>
<sequence>MDIQFLGTGAGQPSKARNVSSLALKLLDEINEVWLFDCGEGTQNRILETTIRPRKVSKIFITHLHGDHIFGLPGFLSSRAFQANEEQTDLEIYGPQGIKSFVLTSLRVSGSRLPYRIHFHEFDQDSLGKILETDKFTVYAEELDHTIFCVGYRVMQKDLEGTLDAEKLKAAGVPFGPLFGKIKNGQDLVLEDGTEIKAADYISAPRPGKIITILGDTRKTDASVRLAVNADVLVHESTYGKGDEKIARNHGHSTNMQAAQVAVEAGAKRLLLNHISARFLSKDISKLKKDAATIFENVHVVKDLEEVEI</sequence>
<protein>
    <recommendedName>
        <fullName evidence="1">Ribonuclease Z</fullName>
        <shortName evidence="1">RNase Z</shortName>
        <ecNumber evidence="1">3.1.26.11</ecNumber>
    </recommendedName>
    <alternativeName>
        <fullName evidence="1">tRNA 3 endonuclease</fullName>
    </alternativeName>
    <alternativeName>
        <fullName evidence="1">tRNase Z</fullName>
    </alternativeName>
</protein>
<dbReference type="EC" id="3.1.26.11" evidence="1"/>
<dbReference type="EMBL" id="CP000918">
    <property type="protein sequence ID" value="ACO17567.1"/>
    <property type="molecule type" value="Genomic_DNA"/>
</dbReference>
<dbReference type="RefSeq" id="WP_000354336.1">
    <property type="nucleotide sequence ID" value="NC_012468.1"/>
</dbReference>
<dbReference type="SMR" id="C1C636"/>
<dbReference type="GeneID" id="45653932"/>
<dbReference type="KEGG" id="snm:SP70585_0733"/>
<dbReference type="HOGENOM" id="CLU_031317_2_0_9"/>
<dbReference type="Proteomes" id="UP000002211">
    <property type="component" value="Chromosome"/>
</dbReference>
<dbReference type="GO" id="GO:0042781">
    <property type="term" value="F:3'-tRNA processing endoribonuclease activity"/>
    <property type="evidence" value="ECO:0007669"/>
    <property type="project" value="UniProtKB-UniRule"/>
</dbReference>
<dbReference type="GO" id="GO:0008270">
    <property type="term" value="F:zinc ion binding"/>
    <property type="evidence" value="ECO:0007669"/>
    <property type="project" value="UniProtKB-UniRule"/>
</dbReference>
<dbReference type="CDD" id="cd07717">
    <property type="entry name" value="RNaseZ_ZiPD-like_MBL-fold"/>
    <property type="match status" value="1"/>
</dbReference>
<dbReference type="FunFam" id="3.60.15.10:FF:000002">
    <property type="entry name" value="Ribonuclease Z"/>
    <property type="match status" value="1"/>
</dbReference>
<dbReference type="Gene3D" id="3.60.15.10">
    <property type="entry name" value="Ribonuclease Z/Hydroxyacylglutathione hydrolase-like"/>
    <property type="match status" value="1"/>
</dbReference>
<dbReference type="HAMAP" id="MF_01818">
    <property type="entry name" value="RNase_Z_BN"/>
    <property type="match status" value="1"/>
</dbReference>
<dbReference type="InterPro" id="IPR001279">
    <property type="entry name" value="Metallo-B-lactamas"/>
</dbReference>
<dbReference type="InterPro" id="IPR036866">
    <property type="entry name" value="RibonucZ/Hydroxyglut_hydro"/>
</dbReference>
<dbReference type="InterPro" id="IPR013471">
    <property type="entry name" value="RNase_Z/BN"/>
</dbReference>
<dbReference type="NCBIfam" id="NF000801">
    <property type="entry name" value="PRK00055.1-3"/>
    <property type="match status" value="1"/>
</dbReference>
<dbReference type="NCBIfam" id="TIGR02651">
    <property type="entry name" value="RNase_Z"/>
    <property type="match status" value="1"/>
</dbReference>
<dbReference type="PANTHER" id="PTHR46018">
    <property type="entry name" value="ZINC PHOSPHODIESTERASE ELAC PROTEIN 1"/>
    <property type="match status" value="1"/>
</dbReference>
<dbReference type="PANTHER" id="PTHR46018:SF2">
    <property type="entry name" value="ZINC PHOSPHODIESTERASE ELAC PROTEIN 1"/>
    <property type="match status" value="1"/>
</dbReference>
<dbReference type="Pfam" id="PF00753">
    <property type="entry name" value="Lactamase_B"/>
    <property type="match status" value="1"/>
</dbReference>
<dbReference type="SUPFAM" id="SSF56281">
    <property type="entry name" value="Metallo-hydrolase/oxidoreductase"/>
    <property type="match status" value="1"/>
</dbReference>
<evidence type="ECO:0000255" key="1">
    <source>
        <dbReference type="HAMAP-Rule" id="MF_01818"/>
    </source>
</evidence>
<reference key="1">
    <citation type="journal article" date="2010" name="Genome Biol.">
        <title>Structure and dynamics of the pan-genome of Streptococcus pneumoniae and closely related species.</title>
        <authorList>
            <person name="Donati C."/>
            <person name="Hiller N.L."/>
            <person name="Tettelin H."/>
            <person name="Muzzi A."/>
            <person name="Croucher N.J."/>
            <person name="Angiuoli S.V."/>
            <person name="Oggioni M."/>
            <person name="Dunning Hotopp J.C."/>
            <person name="Hu F.Z."/>
            <person name="Riley D.R."/>
            <person name="Covacci A."/>
            <person name="Mitchell T.J."/>
            <person name="Bentley S.D."/>
            <person name="Kilian M."/>
            <person name="Ehrlich G.D."/>
            <person name="Rappuoli R."/>
            <person name="Moxon E.R."/>
            <person name="Masignani V."/>
        </authorList>
    </citation>
    <scope>NUCLEOTIDE SEQUENCE [LARGE SCALE GENOMIC DNA]</scope>
    <source>
        <strain>70585</strain>
    </source>
</reference>
<keyword id="KW-0255">Endonuclease</keyword>
<keyword id="KW-0378">Hydrolase</keyword>
<keyword id="KW-0479">Metal-binding</keyword>
<keyword id="KW-0540">Nuclease</keyword>
<keyword id="KW-0819">tRNA processing</keyword>
<keyword id="KW-0862">Zinc</keyword>
<gene>
    <name evidence="1" type="primary">rnz</name>
    <name type="ordered locus">SP70585_0733</name>
</gene>
<name>RNZ_STRP7</name>
<organism>
    <name type="scientific">Streptococcus pneumoniae (strain 70585)</name>
    <dbReference type="NCBI Taxonomy" id="488221"/>
    <lineage>
        <taxon>Bacteria</taxon>
        <taxon>Bacillati</taxon>
        <taxon>Bacillota</taxon>
        <taxon>Bacilli</taxon>
        <taxon>Lactobacillales</taxon>
        <taxon>Streptococcaceae</taxon>
        <taxon>Streptococcus</taxon>
    </lineage>
</organism>
<proteinExistence type="inferred from homology"/>
<comment type="function">
    <text evidence="1">Zinc phosphodiesterase, which displays some tRNA 3'-processing endonuclease activity. Probably involved in tRNA maturation, by removing a 3'-trailer from precursor tRNA.</text>
</comment>
<comment type="catalytic activity">
    <reaction evidence="1">
        <text>Endonucleolytic cleavage of RNA, removing extra 3' nucleotides from tRNA precursor, generating 3' termini of tRNAs. A 3'-hydroxy group is left at the tRNA terminus and a 5'-phosphoryl group is left at the trailer molecule.</text>
        <dbReference type="EC" id="3.1.26.11"/>
    </reaction>
</comment>
<comment type="cofactor">
    <cofactor evidence="1">
        <name>Zn(2+)</name>
        <dbReference type="ChEBI" id="CHEBI:29105"/>
    </cofactor>
    <text evidence="1">Binds 2 Zn(2+) ions.</text>
</comment>
<comment type="subunit">
    <text evidence="1">Homodimer.</text>
</comment>
<comment type="similarity">
    <text evidence="1">Belongs to the RNase Z family.</text>
</comment>